<reference key="1">
    <citation type="submission" date="2008-02" db="EMBL/GenBank/DDBJ databases">
        <title>Complete sequence of Yersinia pseudotuberculosis YPIII.</title>
        <authorList>
            <consortium name="US DOE Joint Genome Institute"/>
            <person name="Copeland A."/>
            <person name="Lucas S."/>
            <person name="Lapidus A."/>
            <person name="Glavina del Rio T."/>
            <person name="Dalin E."/>
            <person name="Tice H."/>
            <person name="Bruce D."/>
            <person name="Goodwin L."/>
            <person name="Pitluck S."/>
            <person name="Munk A.C."/>
            <person name="Brettin T."/>
            <person name="Detter J.C."/>
            <person name="Han C."/>
            <person name="Tapia R."/>
            <person name="Schmutz J."/>
            <person name="Larimer F."/>
            <person name="Land M."/>
            <person name="Hauser L."/>
            <person name="Challacombe J.F."/>
            <person name="Green L."/>
            <person name="Lindler L.E."/>
            <person name="Nikolich M.P."/>
            <person name="Richardson P."/>
        </authorList>
    </citation>
    <scope>NUCLEOTIDE SEQUENCE [LARGE SCALE GENOMIC DNA]</scope>
    <source>
        <strain>YPIII</strain>
    </source>
</reference>
<proteinExistence type="inferred from homology"/>
<evidence type="ECO:0000255" key="1">
    <source>
        <dbReference type="HAMAP-Rule" id="MF_01866"/>
    </source>
</evidence>
<gene>
    <name type="ordered locus">YPK_2120</name>
</gene>
<protein>
    <recommendedName>
        <fullName evidence="1">YcgL domain-containing protein YPK_2120</fullName>
    </recommendedName>
</protein>
<dbReference type="EMBL" id="CP000950">
    <property type="protein sequence ID" value="ACA68406.1"/>
    <property type="molecule type" value="Genomic_DNA"/>
</dbReference>
<dbReference type="RefSeq" id="WP_002211743.1">
    <property type="nucleotide sequence ID" value="NZ_CP009792.1"/>
</dbReference>
<dbReference type="SMR" id="B1JLI7"/>
<dbReference type="KEGG" id="ypy:YPK_2120"/>
<dbReference type="PATRIC" id="fig|502800.11.peg.2794"/>
<dbReference type="Gene3D" id="3.10.510.20">
    <property type="entry name" value="YcgL domain"/>
    <property type="match status" value="1"/>
</dbReference>
<dbReference type="HAMAP" id="MF_01866">
    <property type="entry name" value="UPF0745"/>
    <property type="match status" value="1"/>
</dbReference>
<dbReference type="InterPro" id="IPR038068">
    <property type="entry name" value="YcgL-like_sf"/>
</dbReference>
<dbReference type="InterPro" id="IPR027354">
    <property type="entry name" value="YcgL_dom"/>
</dbReference>
<dbReference type="PANTHER" id="PTHR38109">
    <property type="entry name" value="PROTEIN YCGL"/>
    <property type="match status" value="1"/>
</dbReference>
<dbReference type="PANTHER" id="PTHR38109:SF1">
    <property type="entry name" value="PROTEIN YCGL"/>
    <property type="match status" value="1"/>
</dbReference>
<dbReference type="Pfam" id="PF05166">
    <property type="entry name" value="YcgL"/>
    <property type="match status" value="1"/>
</dbReference>
<dbReference type="SUPFAM" id="SSF160191">
    <property type="entry name" value="YcgL-like"/>
    <property type="match status" value="1"/>
</dbReference>
<dbReference type="PROSITE" id="PS51648">
    <property type="entry name" value="YCGL"/>
    <property type="match status" value="1"/>
</dbReference>
<sequence>MLCAIYRSPKRDQTYLYIEKKDDFSRVPAELLASFGKPQFAMLLALNERKTLATADVEKVKNALIEQGFYLQVPPPPESLLKMHLGETKA</sequence>
<accession>B1JLI7</accession>
<organism>
    <name type="scientific">Yersinia pseudotuberculosis serotype O:3 (strain YPIII)</name>
    <dbReference type="NCBI Taxonomy" id="502800"/>
    <lineage>
        <taxon>Bacteria</taxon>
        <taxon>Pseudomonadati</taxon>
        <taxon>Pseudomonadota</taxon>
        <taxon>Gammaproteobacteria</taxon>
        <taxon>Enterobacterales</taxon>
        <taxon>Yersiniaceae</taxon>
        <taxon>Yersinia</taxon>
    </lineage>
</organism>
<name>Y2120_YERPY</name>
<feature type="chain" id="PRO_0000375419" description="YcgL domain-containing protein YPK_2120">
    <location>
        <begin position="1"/>
        <end position="90"/>
    </location>
</feature>
<feature type="domain" description="YcgL" evidence="1">
    <location>
        <begin position="1"/>
        <end position="85"/>
    </location>
</feature>